<reference key="1">
    <citation type="submission" date="2008-02" db="EMBL/GenBank/DDBJ databases">
        <title>Complete sequence of Escherichia coli C str. ATCC 8739.</title>
        <authorList>
            <person name="Copeland A."/>
            <person name="Lucas S."/>
            <person name="Lapidus A."/>
            <person name="Glavina del Rio T."/>
            <person name="Dalin E."/>
            <person name="Tice H."/>
            <person name="Bruce D."/>
            <person name="Goodwin L."/>
            <person name="Pitluck S."/>
            <person name="Kiss H."/>
            <person name="Brettin T."/>
            <person name="Detter J.C."/>
            <person name="Han C."/>
            <person name="Kuske C.R."/>
            <person name="Schmutz J."/>
            <person name="Larimer F."/>
            <person name="Land M."/>
            <person name="Hauser L."/>
            <person name="Kyrpides N."/>
            <person name="Mikhailova N."/>
            <person name="Ingram L."/>
            <person name="Richardson P."/>
        </authorList>
    </citation>
    <scope>NUCLEOTIDE SEQUENCE [LARGE SCALE GENOMIC DNA]</scope>
    <source>
        <strain>ATCC 8739 / DSM 1576 / NBRC 3972 / NCIMB 8545 / WDCM 00012 / Crooks</strain>
    </source>
</reference>
<comment type="function">
    <text evidence="1">Catalyzes the formation of putrescine from agmatine.</text>
</comment>
<comment type="catalytic activity">
    <reaction evidence="1">
        <text>agmatine + H2O = urea + putrescine</text>
        <dbReference type="Rhea" id="RHEA:13929"/>
        <dbReference type="ChEBI" id="CHEBI:15377"/>
        <dbReference type="ChEBI" id="CHEBI:16199"/>
        <dbReference type="ChEBI" id="CHEBI:58145"/>
        <dbReference type="ChEBI" id="CHEBI:326268"/>
        <dbReference type="EC" id="3.5.3.11"/>
    </reaction>
</comment>
<comment type="cofactor">
    <cofactor evidence="1">
        <name>Mn(2+)</name>
        <dbReference type="ChEBI" id="CHEBI:29035"/>
    </cofactor>
</comment>
<comment type="pathway">
    <text evidence="1">Amine and polyamine biosynthesis; putrescine biosynthesis via agmatine pathway; putrescine from agmatine: step 1/1.</text>
</comment>
<comment type="similarity">
    <text evidence="1">Belongs to the arginase family. Agmatinase subfamily.</text>
</comment>
<dbReference type="EC" id="3.5.3.11" evidence="1"/>
<dbReference type="EMBL" id="CP000946">
    <property type="protein sequence ID" value="ACA76446.1"/>
    <property type="molecule type" value="Genomic_DNA"/>
</dbReference>
<dbReference type="RefSeq" id="WP_000105566.1">
    <property type="nucleotide sequence ID" value="NZ_MTFT01000004.1"/>
</dbReference>
<dbReference type="SMR" id="B1IT67"/>
<dbReference type="GeneID" id="89517749"/>
<dbReference type="KEGG" id="ecl:EcolC_0774"/>
<dbReference type="HOGENOM" id="CLU_039478_0_0_6"/>
<dbReference type="UniPathway" id="UPA00534">
    <property type="reaction ID" value="UER00287"/>
</dbReference>
<dbReference type="GO" id="GO:0008783">
    <property type="term" value="F:agmatinase activity"/>
    <property type="evidence" value="ECO:0007669"/>
    <property type="project" value="UniProtKB-UniRule"/>
</dbReference>
<dbReference type="GO" id="GO:0030145">
    <property type="term" value="F:manganese ion binding"/>
    <property type="evidence" value="ECO:0007669"/>
    <property type="project" value="InterPro"/>
</dbReference>
<dbReference type="GO" id="GO:0033389">
    <property type="term" value="P:putrescine biosynthetic process from arginine, via agmatine"/>
    <property type="evidence" value="ECO:0007669"/>
    <property type="project" value="TreeGrafter"/>
</dbReference>
<dbReference type="GO" id="GO:0008295">
    <property type="term" value="P:spermidine biosynthetic process"/>
    <property type="evidence" value="ECO:0007669"/>
    <property type="project" value="UniProtKB-UniRule"/>
</dbReference>
<dbReference type="CDD" id="cd11592">
    <property type="entry name" value="Agmatinase_PAH"/>
    <property type="match status" value="1"/>
</dbReference>
<dbReference type="FunFam" id="3.40.800.10:FF:000001">
    <property type="entry name" value="Agmatinase"/>
    <property type="match status" value="1"/>
</dbReference>
<dbReference type="Gene3D" id="3.40.800.10">
    <property type="entry name" value="Ureohydrolase domain"/>
    <property type="match status" value="1"/>
</dbReference>
<dbReference type="HAMAP" id="MF_01418">
    <property type="entry name" value="SpeB"/>
    <property type="match status" value="1"/>
</dbReference>
<dbReference type="InterPro" id="IPR023694">
    <property type="entry name" value="Agmatinase"/>
</dbReference>
<dbReference type="InterPro" id="IPR005925">
    <property type="entry name" value="Agmatinase-rel"/>
</dbReference>
<dbReference type="InterPro" id="IPR006035">
    <property type="entry name" value="Ureohydrolase"/>
</dbReference>
<dbReference type="InterPro" id="IPR023696">
    <property type="entry name" value="Ureohydrolase_dom_sf"/>
</dbReference>
<dbReference type="InterPro" id="IPR020855">
    <property type="entry name" value="Ureohydrolase_Mn_BS"/>
</dbReference>
<dbReference type="NCBIfam" id="TIGR01230">
    <property type="entry name" value="agmatinase"/>
    <property type="match status" value="1"/>
</dbReference>
<dbReference type="NCBIfam" id="NF002564">
    <property type="entry name" value="PRK02190.1"/>
    <property type="match status" value="1"/>
</dbReference>
<dbReference type="PANTHER" id="PTHR11358">
    <property type="entry name" value="ARGINASE/AGMATINASE"/>
    <property type="match status" value="1"/>
</dbReference>
<dbReference type="PANTHER" id="PTHR11358:SF26">
    <property type="entry name" value="GUANIDINO ACID HYDROLASE, MITOCHONDRIAL"/>
    <property type="match status" value="1"/>
</dbReference>
<dbReference type="Pfam" id="PF00491">
    <property type="entry name" value="Arginase"/>
    <property type="match status" value="1"/>
</dbReference>
<dbReference type="PIRSF" id="PIRSF036979">
    <property type="entry name" value="Arginase"/>
    <property type="match status" value="1"/>
</dbReference>
<dbReference type="SUPFAM" id="SSF52768">
    <property type="entry name" value="Arginase/deacetylase"/>
    <property type="match status" value="1"/>
</dbReference>
<dbReference type="PROSITE" id="PS01053">
    <property type="entry name" value="ARGINASE_1"/>
    <property type="match status" value="1"/>
</dbReference>
<dbReference type="PROSITE" id="PS51409">
    <property type="entry name" value="ARGINASE_2"/>
    <property type="match status" value="1"/>
</dbReference>
<organism>
    <name type="scientific">Escherichia coli (strain ATCC 8739 / DSM 1576 / NBRC 3972 / NCIMB 8545 / WDCM 00012 / Crooks)</name>
    <dbReference type="NCBI Taxonomy" id="481805"/>
    <lineage>
        <taxon>Bacteria</taxon>
        <taxon>Pseudomonadati</taxon>
        <taxon>Pseudomonadota</taxon>
        <taxon>Gammaproteobacteria</taxon>
        <taxon>Enterobacterales</taxon>
        <taxon>Enterobacteriaceae</taxon>
        <taxon>Escherichia</taxon>
    </lineage>
</organism>
<gene>
    <name evidence="1" type="primary">speB</name>
    <name type="ordered locus">EcolC_0774</name>
</gene>
<feature type="chain" id="PRO_1000087410" description="Agmatinase">
    <location>
        <begin position="1"/>
        <end position="306"/>
    </location>
</feature>
<feature type="binding site" evidence="1">
    <location>
        <position position="126"/>
    </location>
    <ligand>
        <name>Mn(2+)</name>
        <dbReference type="ChEBI" id="CHEBI:29035"/>
    </ligand>
</feature>
<feature type="binding site" evidence="1">
    <location>
        <position position="149"/>
    </location>
    <ligand>
        <name>Mn(2+)</name>
        <dbReference type="ChEBI" id="CHEBI:29035"/>
    </ligand>
</feature>
<feature type="binding site" evidence="1">
    <location>
        <position position="151"/>
    </location>
    <ligand>
        <name>Mn(2+)</name>
        <dbReference type="ChEBI" id="CHEBI:29035"/>
    </ligand>
</feature>
<feature type="binding site" evidence="1">
    <location>
        <position position="153"/>
    </location>
    <ligand>
        <name>Mn(2+)</name>
        <dbReference type="ChEBI" id="CHEBI:29035"/>
    </ligand>
</feature>
<feature type="binding site" evidence="1">
    <location>
        <position position="230"/>
    </location>
    <ligand>
        <name>Mn(2+)</name>
        <dbReference type="ChEBI" id="CHEBI:29035"/>
    </ligand>
</feature>
<feature type="binding site" evidence="1">
    <location>
        <position position="232"/>
    </location>
    <ligand>
        <name>Mn(2+)</name>
        <dbReference type="ChEBI" id="CHEBI:29035"/>
    </ligand>
</feature>
<proteinExistence type="inferred from homology"/>
<name>SPEB_ECOLC</name>
<keyword id="KW-0378">Hydrolase</keyword>
<keyword id="KW-0464">Manganese</keyword>
<keyword id="KW-0479">Metal-binding</keyword>
<keyword id="KW-0620">Polyamine biosynthesis</keyword>
<keyword id="KW-0661">Putrescine biosynthesis</keyword>
<keyword id="KW-0745">Spermidine biosynthesis</keyword>
<protein>
    <recommendedName>
        <fullName evidence="1">Agmatinase</fullName>
        <ecNumber evidence="1">3.5.3.11</ecNumber>
    </recommendedName>
    <alternativeName>
        <fullName evidence="1">Agmatine ureohydrolase</fullName>
        <shortName evidence="1">AUH</shortName>
    </alternativeName>
</protein>
<evidence type="ECO:0000255" key="1">
    <source>
        <dbReference type="HAMAP-Rule" id="MF_01418"/>
    </source>
</evidence>
<accession>B1IT67</accession>
<sequence>MSTLGHQYDNSLVSNAFGFLRLPMNFQPYDSDADWVITGVPFDMATSGRAGGRHGPAAIRQVSTNLAWEHNRFPWNFDMRERLNVVDCGDLVYAFGDAREMSEKLQAHAEKLLAAGKRMLSFGGDHFVTLPLLRAHAKHFGKMALVHFDAHTDTYANGCEFDHGTMFYTAPKEGLIDPNHSVQIGIRTEFDKDNGFTVLDACQVNDRSVDDVIAQVKQIVGDMPVYLTFDIDCLDPAFAPGTGTPVIGGLTSDRAIKLVRGLKDLNIVGMDVVEVAPAYDQSEITALAAATLALEMLYIQAAKKGE</sequence>